<proteinExistence type="evidence at protein level"/>
<name>ACT3_STRCO</name>
<accession>P16544</accession>
<keyword id="KW-0002">3D-structure</keyword>
<keyword id="KW-0045">Antibiotic biosynthesis</keyword>
<keyword id="KW-0521">NADP</keyword>
<keyword id="KW-0560">Oxidoreductase</keyword>
<keyword id="KW-1185">Reference proteome</keyword>
<evidence type="ECO:0000255" key="1">
    <source>
        <dbReference type="PROSITE-ProRule" id="PRU10001"/>
    </source>
</evidence>
<evidence type="ECO:0000269" key="2">
    <source>
    </source>
</evidence>
<evidence type="ECO:0000269" key="3">
    <source>
    </source>
</evidence>
<evidence type="ECO:0000305" key="4"/>
<evidence type="ECO:0007744" key="5">
    <source>
        <dbReference type="PDB" id="1W4Z"/>
    </source>
</evidence>
<evidence type="ECO:0007744" key="6">
    <source>
        <dbReference type="PDB" id="1X7G"/>
    </source>
</evidence>
<evidence type="ECO:0007744" key="7">
    <source>
        <dbReference type="PDB" id="1X7H"/>
    </source>
</evidence>
<evidence type="ECO:0007744" key="8">
    <source>
        <dbReference type="PDB" id="1XR3"/>
    </source>
</evidence>
<evidence type="ECO:0007829" key="9">
    <source>
        <dbReference type="PDB" id="2RHC"/>
    </source>
</evidence>
<evidence type="ECO:0007829" key="10">
    <source>
        <dbReference type="PDB" id="3CSD"/>
    </source>
</evidence>
<gene>
    <name type="primary">actIII</name>
    <name type="ordered locus">SCO5086</name>
    <name type="ORF">SCBAC28G1.12c</name>
</gene>
<comment type="pathway">
    <text>Antibiotic biosynthesis; actinorhodin biosynthesis.</text>
</comment>
<comment type="subunit">
    <text evidence="2 3">Homotetramer.</text>
</comment>
<comment type="similarity">
    <text evidence="4">Belongs to the short-chain dehydrogenases/reductases (SDR) family.</text>
</comment>
<sequence length="261" mass="27265">MATQDSEVALVTGATSGIGLEIARRLGKEGLRVFVCARGEEGLRTTLKELREAGVEADGRTCDVRSVPEIEALVAAVVERYGPVDVLVNNAGRPGGGATAELADELWLDVVETNLTGVFRVTKQVLKAGGMLERGTGRIVNIASTGGKQGVVHAAPYSASKHGVVGFTKALGLELARTGITVNAVCPGFVETPMAASVREHYSDIWEVSTEEAFDRITARVPIGRYVQPSEVAEMVAYLIGPGAAAVTAQALNVCGGLGNY</sequence>
<reference key="1">
    <citation type="journal article" date="1988" name="Gene">
        <title>Nucleotide sequence, transcription and deduced function of a gene involved in polyketide antibiotic synthesis in Streptomyces coelicolor.</title>
        <authorList>
            <person name="Hallam S."/>
            <person name="Malpartida F."/>
            <person name="Hopwood D."/>
        </authorList>
    </citation>
    <scope>NUCLEOTIDE SEQUENCE [GENOMIC DNA]</scope>
</reference>
<reference key="2">
    <citation type="journal article" date="2002" name="Nature">
        <title>Complete genome sequence of the model actinomycete Streptomyces coelicolor A3(2).</title>
        <authorList>
            <person name="Bentley S.D."/>
            <person name="Chater K.F."/>
            <person name="Cerdeno-Tarraga A.-M."/>
            <person name="Challis G.L."/>
            <person name="Thomson N.R."/>
            <person name="James K.D."/>
            <person name="Harris D.E."/>
            <person name="Quail M.A."/>
            <person name="Kieser H."/>
            <person name="Harper D."/>
            <person name="Bateman A."/>
            <person name="Brown S."/>
            <person name="Chandra G."/>
            <person name="Chen C.W."/>
            <person name="Collins M."/>
            <person name="Cronin A."/>
            <person name="Fraser A."/>
            <person name="Goble A."/>
            <person name="Hidalgo J."/>
            <person name="Hornsby T."/>
            <person name="Howarth S."/>
            <person name="Huang C.-H."/>
            <person name="Kieser T."/>
            <person name="Larke L."/>
            <person name="Murphy L.D."/>
            <person name="Oliver K."/>
            <person name="O'Neil S."/>
            <person name="Rabbinowitsch E."/>
            <person name="Rajandream M.A."/>
            <person name="Rutherford K.M."/>
            <person name="Rutter S."/>
            <person name="Seeger K."/>
            <person name="Saunders D."/>
            <person name="Sharp S."/>
            <person name="Squares R."/>
            <person name="Squares S."/>
            <person name="Taylor K."/>
            <person name="Warren T."/>
            <person name="Wietzorrek A."/>
            <person name="Woodward J.R."/>
            <person name="Barrell B.G."/>
            <person name="Parkhill J."/>
            <person name="Hopwood D.A."/>
        </authorList>
    </citation>
    <scope>NUCLEOTIDE SEQUENCE [LARGE SCALE GENOMIC DNA]</scope>
    <source>
        <strain>ATCC BAA-471 / A3(2) / M145</strain>
    </source>
</reference>
<reference evidence="6 7 8" key="3">
    <citation type="journal article" date="2004" name="Biochemistry">
        <title>Structural analysis of actinorhodin polyketide ketoreductase: cofactor binding and substrate specificity.</title>
        <authorList>
            <person name="Korman T.P."/>
            <person name="Hill J.A."/>
            <person name="Vu T.N."/>
            <person name="Tsai S.C."/>
        </authorList>
    </citation>
    <scope>X-RAY CRYSTALLOGRAPHY (2.3 ANGSTROMS) IN COMPLEX WITH NADPH</scope>
</reference>
<reference evidence="5" key="4">
    <citation type="journal article" date="2004" name="Structure">
        <title>The crystal structure of the actIII actinorhodin polyketide reductase: proposed mechanism for ACP and polyketide binding.</title>
        <authorList>
            <person name="Hadfield A.T."/>
            <person name="Limpkin C."/>
            <person name="Teartasin W."/>
            <person name="Simpson T.J."/>
            <person name="Crosby J."/>
            <person name="Crump M.P."/>
        </authorList>
    </citation>
    <scope>X-RAY CRYSTALLOGRAPHY (2.5 ANGSTROMS) IN COMPLEX WITH NADPH</scope>
    <scope>SUBUNIT</scope>
</reference>
<dbReference type="EC" id="1.3.1.-"/>
<dbReference type="EMBL" id="M19536">
    <property type="protein sequence ID" value="AAA26688.1"/>
    <property type="molecule type" value="Genomic_DNA"/>
</dbReference>
<dbReference type="EMBL" id="AL939122">
    <property type="protein sequence ID" value="CAC44199.1"/>
    <property type="molecule type" value="Genomic_DNA"/>
</dbReference>
<dbReference type="PIR" id="JS0108">
    <property type="entry name" value="A28788"/>
</dbReference>
<dbReference type="RefSeq" id="NP_629236.1">
    <property type="nucleotide sequence ID" value="NC_003888.3"/>
</dbReference>
<dbReference type="RefSeq" id="WP_003973892.1">
    <property type="nucleotide sequence ID" value="NZ_VNID01000008.1"/>
</dbReference>
<dbReference type="PDB" id="1W4Z">
    <property type="method" value="X-ray"/>
    <property type="resolution" value="2.50 A"/>
    <property type="chains" value="A/B=1-261"/>
</dbReference>
<dbReference type="PDB" id="1X7G">
    <property type="method" value="X-ray"/>
    <property type="resolution" value="2.30 A"/>
    <property type="chains" value="A/B=1-261"/>
</dbReference>
<dbReference type="PDB" id="1X7H">
    <property type="method" value="X-ray"/>
    <property type="resolution" value="2.30 A"/>
    <property type="chains" value="A/B=1-261"/>
</dbReference>
<dbReference type="PDB" id="1XR3">
    <property type="method" value="X-ray"/>
    <property type="resolution" value="2.71 A"/>
    <property type="chains" value="A/B=1-261"/>
</dbReference>
<dbReference type="PDB" id="2RH4">
    <property type="method" value="X-ray"/>
    <property type="resolution" value="2.30 A"/>
    <property type="chains" value="A/B=1-261"/>
</dbReference>
<dbReference type="PDB" id="2RHC">
    <property type="method" value="X-ray"/>
    <property type="resolution" value="2.10 A"/>
    <property type="chains" value="A/B=1-261"/>
</dbReference>
<dbReference type="PDB" id="2RHR">
    <property type="method" value="X-ray"/>
    <property type="resolution" value="2.50 A"/>
    <property type="chains" value="A/B=1-261"/>
</dbReference>
<dbReference type="PDB" id="3CSD">
    <property type="method" value="X-ray"/>
    <property type="resolution" value="2.29 A"/>
    <property type="chains" value="A/B=1-261"/>
</dbReference>
<dbReference type="PDB" id="3QRW">
    <property type="method" value="X-ray"/>
    <property type="resolution" value="2.79 A"/>
    <property type="chains" value="A/B=1-261"/>
</dbReference>
<dbReference type="PDB" id="3RI3">
    <property type="method" value="X-ray"/>
    <property type="resolution" value="2.29 A"/>
    <property type="chains" value="A/B=1-261"/>
</dbReference>
<dbReference type="PDB" id="4DBZ">
    <property type="method" value="X-ray"/>
    <property type="resolution" value="2.64 A"/>
    <property type="chains" value="A/B=1-261"/>
</dbReference>
<dbReference type="PDB" id="4DC0">
    <property type="method" value="X-ray"/>
    <property type="resolution" value="2.81 A"/>
    <property type="chains" value="A/B=1-261"/>
</dbReference>
<dbReference type="PDB" id="4DC1">
    <property type="method" value="X-ray"/>
    <property type="resolution" value="2.82 A"/>
    <property type="chains" value="A/B=1-261"/>
</dbReference>
<dbReference type="PDBsum" id="1W4Z"/>
<dbReference type="PDBsum" id="1X7G"/>
<dbReference type="PDBsum" id="1X7H"/>
<dbReference type="PDBsum" id="1XR3"/>
<dbReference type="PDBsum" id="2RH4"/>
<dbReference type="PDBsum" id="2RHC"/>
<dbReference type="PDBsum" id="2RHR"/>
<dbReference type="PDBsum" id="3CSD"/>
<dbReference type="PDBsum" id="3QRW"/>
<dbReference type="PDBsum" id="3RI3"/>
<dbReference type="PDBsum" id="4DBZ"/>
<dbReference type="PDBsum" id="4DC0"/>
<dbReference type="PDBsum" id="4DC1"/>
<dbReference type="SMR" id="P16544"/>
<dbReference type="STRING" id="100226.gene:17762735"/>
<dbReference type="DrugBank" id="DB07715">
    <property type="generic name" value="Emodin"/>
</dbReference>
<dbReference type="DrugBank" id="DB01942">
    <property type="generic name" value="Formic acid"/>
</dbReference>
<dbReference type="DrugBank" id="DB03461">
    <property type="generic name" value="Nicotinamide adenine dinucleotide phosphate"/>
</dbReference>
<dbReference type="PaxDb" id="100226-SCO5086"/>
<dbReference type="KEGG" id="sco:SCO5086"/>
<dbReference type="PATRIC" id="fig|100226.15.peg.5166"/>
<dbReference type="eggNOG" id="COG1028">
    <property type="taxonomic scope" value="Bacteria"/>
</dbReference>
<dbReference type="HOGENOM" id="CLU_010194_1_0_11"/>
<dbReference type="InParanoid" id="P16544"/>
<dbReference type="OrthoDB" id="9804774at2"/>
<dbReference type="PhylomeDB" id="P16544"/>
<dbReference type="UniPathway" id="UPA00173"/>
<dbReference type="EvolutionaryTrace" id="P16544"/>
<dbReference type="Proteomes" id="UP000001973">
    <property type="component" value="Chromosome"/>
</dbReference>
<dbReference type="GO" id="GO:0016491">
    <property type="term" value="F:oxidoreductase activity"/>
    <property type="evidence" value="ECO:0000318"/>
    <property type="project" value="GO_Central"/>
</dbReference>
<dbReference type="GO" id="GO:0017000">
    <property type="term" value="P:antibiotic biosynthetic process"/>
    <property type="evidence" value="ECO:0007669"/>
    <property type="project" value="UniProtKB-KW"/>
</dbReference>
<dbReference type="GO" id="GO:0032787">
    <property type="term" value="P:monocarboxylic acid metabolic process"/>
    <property type="evidence" value="ECO:0007669"/>
    <property type="project" value="UniProtKB-ARBA"/>
</dbReference>
<dbReference type="GO" id="GO:0008202">
    <property type="term" value="P:steroid metabolic process"/>
    <property type="evidence" value="ECO:0000318"/>
    <property type="project" value="GO_Central"/>
</dbReference>
<dbReference type="CDD" id="cd08945">
    <property type="entry name" value="PKR_SDR_c"/>
    <property type="match status" value="1"/>
</dbReference>
<dbReference type="FunFam" id="3.40.50.720:FF:000084">
    <property type="entry name" value="Short-chain dehydrogenase reductase"/>
    <property type="match status" value="1"/>
</dbReference>
<dbReference type="Gene3D" id="3.40.50.720">
    <property type="entry name" value="NAD(P)-binding Rossmann-like Domain"/>
    <property type="match status" value="1"/>
</dbReference>
<dbReference type="InterPro" id="IPR036291">
    <property type="entry name" value="NAD(P)-bd_dom_sf"/>
</dbReference>
<dbReference type="InterPro" id="IPR020904">
    <property type="entry name" value="Sc_DH/Rdtase_CS"/>
</dbReference>
<dbReference type="InterPro" id="IPR050259">
    <property type="entry name" value="SDR"/>
</dbReference>
<dbReference type="InterPro" id="IPR002347">
    <property type="entry name" value="SDR_fam"/>
</dbReference>
<dbReference type="NCBIfam" id="NF009466">
    <property type="entry name" value="PRK12826.1-2"/>
    <property type="match status" value="1"/>
</dbReference>
<dbReference type="PANTHER" id="PTHR42879">
    <property type="entry name" value="3-OXOACYL-(ACYL-CARRIER-PROTEIN) REDUCTASE"/>
    <property type="match status" value="1"/>
</dbReference>
<dbReference type="PANTHER" id="PTHR42879:SF2">
    <property type="entry name" value="3-OXOACYL-[ACYL-CARRIER-PROTEIN] REDUCTASE FABG"/>
    <property type="match status" value="1"/>
</dbReference>
<dbReference type="Pfam" id="PF00106">
    <property type="entry name" value="adh_short"/>
    <property type="match status" value="1"/>
</dbReference>
<dbReference type="PRINTS" id="PR00081">
    <property type="entry name" value="GDHRDH"/>
</dbReference>
<dbReference type="PRINTS" id="PR00080">
    <property type="entry name" value="SDRFAMILY"/>
</dbReference>
<dbReference type="SUPFAM" id="SSF51735">
    <property type="entry name" value="NAD(P)-binding Rossmann-fold domains"/>
    <property type="match status" value="1"/>
</dbReference>
<dbReference type="PROSITE" id="PS00061">
    <property type="entry name" value="ADH_SHORT"/>
    <property type="match status" value="1"/>
</dbReference>
<organism>
    <name type="scientific">Streptomyces coelicolor (strain ATCC BAA-471 / A3(2) / M145)</name>
    <dbReference type="NCBI Taxonomy" id="100226"/>
    <lineage>
        <taxon>Bacteria</taxon>
        <taxon>Bacillati</taxon>
        <taxon>Actinomycetota</taxon>
        <taxon>Actinomycetes</taxon>
        <taxon>Kitasatosporales</taxon>
        <taxon>Streptomycetaceae</taxon>
        <taxon>Streptomyces</taxon>
        <taxon>Streptomyces albidoflavus group</taxon>
    </lineage>
</organism>
<protein>
    <recommendedName>
        <fullName>Putative ketoacyl reductase</fullName>
        <ecNumber>1.3.1.-</ecNumber>
    </recommendedName>
</protein>
<feature type="chain" id="PRO_0000054447" description="Putative ketoacyl reductase">
    <location>
        <begin position="1"/>
        <end position="261"/>
    </location>
</feature>
<feature type="active site" description="Proton acceptor" evidence="1">
    <location>
        <position position="157"/>
    </location>
</feature>
<feature type="binding site" evidence="2 3 5 6 7 8">
    <location>
        <position position="15"/>
    </location>
    <ligand>
        <name>NADP(+)</name>
        <dbReference type="ChEBI" id="CHEBI:58349"/>
    </ligand>
</feature>
<feature type="binding site" evidence="2 3 5 6 7 8">
    <location>
        <position position="16"/>
    </location>
    <ligand>
        <name>NADP(+)</name>
        <dbReference type="ChEBI" id="CHEBI:58349"/>
    </ligand>
</feature>
<feature type="binding site" evidence="2 3 5 6 7 8">
    <location>
        <position position="18"/>
    </location>
    <ligand>
        <name>NADP(+)</name>
        <dbReference type="ChEBI" id="CHEBI:58349"/>
    </ligand>
</feature>
<feature type="binding site" evidence="2 3 5 6 7 8">
    <location>
        <position position="38"/>
    </location>
    <ligand>
        <name>NADP(+)</name>
        <dbReference type="ChEBI" id="CHEBI:58349"/>
    </ligand>
</feature>
<feature type="binding site" evidence="2 3 5 6 7 8">
    <location>
        <position position="39"/>
    </location>
    <ligand>
        <name>NADP(+)</name>
        <dbReference type="ChEBI" id="CHEBI:58349"/>
    </ligand>
</feature>
<feature type="binding site" evidence="2 3 5 6 7 8">
    <location>
        <position position="63"/>
    </location>
    <ligand>
        <name>NADP(+)</name>
        <dbReference type="ChEBI" id="CHEBI:58349"/>
    </ligand>
</feature>
<feature type="binding site" evidence="2 3 5 6 7 8">
    <location>
        <position position="64"/>
    </location>
    <ligand>
        <name>NADP(+)</name>
        <dbReference type="ChEBI" id="CHEBI:58349"/>
    </ligand>
</feature>
<feature type="binding site" evidence="2 3 5 6 7 8">
    <location>
        <position position="90"/>
    </location>
    <ligand>
        <name>NADP(+)</name>
        <dbReference type="ChEBI" id="CHEBI:58349"/>
    </ligand>
</feature>
<feature type="binding site" evidence="2 3 6 7 8">
    <location>
        <position position="157"/>
    </location>
    <ligand>
        <name>NADP(+)</name>
        <dbReference type="ChEBI" id="CHEBI:58349"/>
    </ligand>
</feature>
<feature type="binding site" evidence="2 3 5 6 7 8">
    <location>
        <position position="161"/>
    </location>
    <ligand>
        <name>NADP(+)</name>
        <dbReference type="ChEBI" id="CHEBI:58349"/>
    </ligand>
</feature>
<feature type="binding site" evidence="2 3 5 6 7 8">
    <location>
        <position position="190"/>
    </location>
    <ligand>
        <name>NADP(+)</name>
        <dbReference type="ChEBI" id="CHEBI:58349"/>
    </ligand>
</feature>
<feature type="binding site" evidence="2 3 5 6 7 8">
    <location>
        <position position="192"/>
    </location>
    <ligand>
        <name>NADP(+)</name>
        <dbReference type="ChEBI" id="CHEBI:58349"/>
    </ligand>
</feature>
<feature type="strand" evidence="9">
    <location>
        <begin position="8"/>
        <end position="12"/>
    </location>
</feature>
<feature type="helix" evidence="9">
    <location>
        <begin position="17"/>
        <end position="28"/>
    </location>
</feature>
<feature type="strand" evidence="9">
    <location>
        <begin position="32"/>
        <end position="38"/>
    </location>
</feature>
<feature type="helix" evidence="9">
    <location>
        <begin position="40"/>
        <end position="52"/>
    </location>
</feature>
<feature type="strand" evidence="9">
    <location>
        <begin position="57"/>
        <end position="61"/>
    </location>
</feature>
<feature type="helix" evidence="9">
    <location>
        <begin position="67"/>
        <end position="80"/>
    </location>
</feature>
<feature type="strand" evidence="9">
    <location>
        <begin position="85"/>
        <end position="89"/>
    </location>
</feature>
<feature type="helix" evidence="9">
    <location>
        <begin position="99"/>
        <end position="101"/>
    </location>
</feature>
<feature type="helix" evidence="9">
    <location>
        <begin position="104"/>
        <end position="114"/>
    </location>
</feature>
<feature type="helix" evidence="9">
    <location>
        <begin position="116"/>
        <end position="126"/>
    </location>
</feature>
<feature type="turn" evidence="9">
    <location>
        <begin position="127"/>
        <end position="129"/>
    </location>
</feature>
<feature type="helix" evidence="9">
    <location>
        <begin position="131"/>
        <end position="134"/>
    </location>
</feature>
<feature type="strand" evidence="9">
    <location>
        <begin position="136"/>
        <end position="142"/>
    </location>
</feature>
<feature type="helix" evidence="9">
    <location>
        <begin position="145"/>
        <end position="147"/>
    </location>
</feature>
<feature type="helix" evidence="9">
    <location>
        <begin position="155"/>
        <end position="175"/>
    </location>
</feature>
<feature type="turn" evidence="9">
    <location>
        <begin position="176"/>
        <end position="178"/>
    </location>
</feature>
<feature type="strand" evidence="9">
    <location>
        <begin position="179"/>
        <end position="187"/>
    </location>
</feature>
<feature type="strand" evidence="10">
    <location>
        <begin position="189"/>
        <end position="192"/>
    </location>
</feature>
<feature type="helix" evidence="9">
    <location>
        <begin position="193"/>
        <end position="206"/>
    </location>
</feature>
<feature type="helix" evidence="9">
    <location>
        <begin position="210"/>
        <end position="220"/>
    </location>
</feature>
<feature type="helix" evidence="9">
    <location>
        <begin position="229"/>
        <end position="240"/>
    </location>
</feature>
<feature type="helix" evidence="9">
    <location>
        <begin position="242"/>
        <end position="244"/>
    </location>
</feature>
<feature type="strand" evidence="9">
    <location>
        <begin position="251"/>
        <end position="255"/>
    </location>
</feature>